<feature type="chain" id="PRO_0000059381" description="Probable disulfide formation protein">
    <location>
        <begin position="1"/>
        <end position="136"/>
    </location>
</feature>
<feature type="transmembrane region" description="Helical" evidence="1">
    <location>
        <begin position="7"/>
        <end position="26"/>
    </location>
</feature>
<feature type="transmembrane region" description="Helical" evidence="1">
    <location>
        <begin position="41"/>
        <end position="60"/>
    </location>
</feature>
<feature type="transmembrane region" description="Helical" evidence="1">
    <location>
        <begin position="67"/>
        <end position="84"/>
    </location>
</feature>
<feature type="transmembrane region" description="Helical" evidence="1">
    <location>
        <begin position="109"/>
        <end position="131"/>
    </location>
</feature>
<feature type="disulfide bond" description="Redox-active" evidence="1">
    <location>
        <begin position="36"/>
        <end position="39"/>
    </location>
</feature>
<feature type="disulfide bond" description="Redox-active" evidence="1">
    <location>
        <begin position="96"/>
        <end position="101"/>
    </location>
</feature>
<comment type="function">
    <text evidence="1">Required for disulfide bond formation in some proteins.</text>
</comment>
<comment type="subcellular location">
    <subcellularLocation>
        <location evidence="1">Cell inner membrane</location>
        <topology evidence="1">Multi-pass membrane protein</topology>
    </subcellularLocation>
</comment>
<comment type="similarity">
    <text evidence="1">Belongs to the DsbB family. BdbC subfamily.</text>
</comment>
<comment type="sequence caution" evidence="2">
    <conflict type="erroneous initiation">
        <sequence resource="EMBL-CDS" id="AAP98166"/>
    </conflict>
</comment>
<name>BDBC_CHLPN</name>
<protein>
    <recommendedName>
        <fullName evidence="1">Probable disulfide formation protein</fullName>
    </recommendedName>
    <alternativeName>
        <fullName evidence="1">Disulfide oxidoreductase</fullName>
    </alternativeName>
    <alternativeName>
        <fullName evidence="1">Thiol-disulfide oxidoreductase</fullName>
    </alternativeName>
</protein>
<reference key="1">
    <citation type="journal article" date="1999" name="Nat. Genet.">
        <title>Comparative genomes of Chlamydia pneumoniae and C. trachomatis.</title>
        <authorList>
            <person name="Kalman S."/>
            <person name="Mitchell W.P."/>
            <person name="Marathe R."/>
            <person name="Lammel C.J."/>
            <person name="Fan J."/>
            <person name="Hyman R.W."/>
            <person name="Olinger L."/>
            <person name="Grimwood J."/>
            <person name="Davis R.W."/>
            <person name="Stephens R.S."/>
        </authorList>
    </citation>
    <scope>NUCLEOTIDE SEQUENCE [LARGE SCALE GENOMIC DNA]</scope>
    <source>
        <strain>CWL029</strain>
    </source>
</reference>
<reference key="2">
    <citation type="journal article" date="2000" name="Nucleic Acids Res.">
        <title>Genome sequences of Chlamydia trachomatis MoPn and Chlamydia pneumoniae AR39.</title>
        <authorList>
            <person name="Read T.D."/>
            <person name="Brunham R.C."/>
            <person name="Shen C."/>
            <person name="Gill S.R."/>
            <person name="Heidelberg J.F."/>
            <person name="White O."/>
            <person name="Hickey E.K."/>
            <person name="Peterson J.D."/>
            <person name="Utterback T.R."/>
            <person name="Berry K.J."/>
            <person name="Bass S."/>
            <person name="Linher K.D."/>
            <person name="Weidman J.F."/>
            <person name="Khouri H.M."/>
            <person name="Craven B."/>
            <person name="Bowman C."/>
            <person name="Dodson R.J."/>
            <person name="Gwinn M.L."/>
            <person name="Nelson W.C."/>
            <person name="DeBoy R.T."/>
            <person name="Kolonay J.F."/>
            <person name="McClarty G."/>
            <person name="Salzberg S.L."/>
            <person name="Eisen J.A."/>
            <person name="Fraser C.M."/>
        </authorList>
    </citation>
    <scope>NUCLEOTIDE SEQUENCE [LARGE SCALE GENOMIC DNA]</scope>
    <source>
        <strain>AR39</strain>
    </source>
</reference>
<reference key="3">
    <citation type="journal article" date="2000" name="Nucleic Acids Res.">
        <title>Comparison of whole genome sequences of Chlamydia pneumoniae J138 from Japan and CWL029 from USA.</title>
        <authorList>
            <person name="Shirai M."/>
            <person name="Hirakawa H."/>
            <person name="Kimoto M."/>
            <person name="Tabuchi M."/>
            <person name="Kishi F."/>
            <person name="Ouchi K."/>
            <person name="Shiba T."/>
            <person name="Ishii K."/>
            <person name="Hattori M."/>
            <person name="Kuhara S."/>
            <person name="Nakazawa T."/>
        </authorList>
    </citation>
    <scope>NUCLEOTIDE SEQUENCE [LARGE SCALE GENOMIC DNA]</scope>
    <source>
        <strain>J138</strain>
    </source>
</reference>
<reference key="4">
    <citation type="submission" date="2002-05" db="EMBL/GenBank/DDBJ databases">
        <title>The genome sequence of Chlamydia pneumoniae TW183 and comparison with other Chlamydia strains based on whole genome sequence analysis.</title>
        <authorList>
            <person name="Geng M.M."/>
            <person name="Schuhmacher A."/>
            <person name="Muehldorfer I."/>
            <person name="Bensch K.W."/>
            <person name="Schaefer K.P."/>
            <person name="Schneider S."/>
            <person name="Pohl T."/>
            <person name="Essig A."/>
            <person name="Marre R."/>
            <person name="Melchers K."/>
        </authorList>
    </citation>
    <scope>NUCLEOTIDE SEQUENCE [LARGE SCALE GENOMIC DNA]</scope>
    <source>
        <strain>TW-183</strain>
    </source>
</reference>
<keyword id="KW-0997">Cell inner membrane</keyword>
<keyword id="KW-1003">Cell membrane</keyword>
<keyword id="KW-0143">Chaperone</keyword>
<keyword id="KW-1015">Disulfide bond</keyword>
<keyword id="KW-0249">Electron transport</keyword>
<keyword id="KW-0472">Membrane</keyword>
<keyword id="KW-0560">Oxidoreductase</keyword>
<keyword id="KW-0676">Redox-active center</keyword>
<keyword id="KW-0812">Transmembrane</keyword>
<keyword id="KW-1133">Transmembrane helix</keyword>
<keyword id="KW-0813">Transport</keyword>
<dbReference type="EMBL" id="AE001363">
    <property type="protein sequence ID" value="AAD18380.1"/>
    <property type="molecule type" value="Genomic_DNA"/>
</dbReference>
<dbReference type="EMBL" id="AE002161">
    <property type="protein sequence ID" value="AAF73684.1"/>
    <property type="molecule type" value="Genomic_DNA"/>
</dbReference>
<dbReference type="EMBL" id="BA000008">
    <property type="protein sequence ID" value="BAA98437.1"/>
    <property type="molecule type" value="Genomic_DNA"/>
</dbReference>
<dbReference type="EMBL" id="AE009440">
    <property type="protein sequence ID" value="AAP98166.1"/>
    <property type="status" value="ALT_INIT"/>
    <property type="molecule type" value="Genomic_DNA"/>
</dbReference>
<dbReference type="PIR" id="B72105">
    <property type="entry name" value="B72105"/>
</dbReference>
<dbReference type="PIR" id="C86519">
    <property type="entry name" value="C86519"/>
</dbReference>
<dbReference type="RefSeq" id="NP_224436.1">
    <property type="nucleotide sequence ID" value="NC_000922.1"/>
</dbReference>
<dbReference type="RefSeq" id="WP_010882878.1">
    <property type="nucleotide sequence ID" value="NZ_LN847257.1"/>
</dbReference>
<dbReference type="STRING" id="406984.CPK_ORF00737"/>
<dbReference type="GeneID" id="45050272"/>
<dbReference type="KEGG" id="cpa:CP_0537"/>
<dbReference type="KEGG" id="cpj:dsbB"/>
<dbReference type="KEGG" id="cpn:CPn_0227"/>
<dbReference type="KEGG" id="cpt:CpB0233"/>
<dbReference type="PATRIC" id="fig|115713.3.peg.257"/>
<dbReference type="eggNOG" id="COG1495">
    <property type="taxonomic scope" value="Bacteria"/>
</dbReference>
<dbReference type="HOGENOM" id="CLU_128688_0_0_0"/>
<dbReference type="OrthoDB" id="158402at2"/>
<dbReference type="Proteomes" id="UP000000583">
    <property type="component" value="Chromosome"/>
</dbReference>
<dbReference type="Proteomes" id="UP000000801">
    <property type="component" value="Chromosome"/>
</dbReference>
<dbReference type="GO" id="GO:0005886">
    <property type="term" value="C:plasma membrane"/>
    <property type="evidence" value="ECO:0007669"/>
    <property type="project" value="UniProtKB-SubCell"/>
</dbReference>
<dbReference type="GO" id="GO:0015035">
    <property type="term" value="F:protein-disulfide reductase activity"/>
    <property type="evidence" value="ECO:0007669"/>
    <property type="project" value="UniProtKB-UniRule"/>
</dbReference>
<dbReference type="GO" id="GO:0006457">
    <property type="term" value="P:protein folding"/>
    <property type="evidence" value="ECO:0007669"/>
    <property type="project" value="InterPro"/>
</dbReference>
<dbReference type="Gene3D" id="1.20.1550.10">
    <property type="entry name" value="DsbB-like"/>
    <property type="match status" value="1"/>
</dbReference>
<dbReference type="HAMAP" id="MF_00287">
    <property type="entry name" value="BdbC"/>
    <property type="match status" value="1"/>
</dbReference>
<dbReference type="InterPro" id="IPR003752">
    <property type="entry name" value="DiS_bond_form_DsbB/BdbC"/>
</dbReference>
<dbReference type="InterPro" id="IPR012187">
    <property type="entry name" value="Disulphide_bond_form_BdbC"/>
</dbReference>
<dbReference type="InterPro" id="IPR023380">
    <property type="entry name" value="DsbB-like_sf"/>
</dbReference>
<dbReference type="NCBIfam" id="NF001863">
    <property type="entry name" value="PRK00611.1"/>
    <property type="match status" value="1"/>
</dbReference>
<dbReference type="PANTHER" id="PTHR43469">
    <property type="entry name" value="DISULFIDE FORMATION PROTEIN-RELATED"/>
    <property type="match status" value="1"/>
</dbReference>
<dbReference type="PANTHER" id="PTHR43469:SF1">
    <property type="entry name" value="SPBETA PROPHAGE-DERIVED DISULFIDE BOND FORMATION PROTEIN B"/>
    <property type="match status" value="1"/>
</dbReference>
<dbReference type="Pfam" id="PF02600">
    <property type="entry name" value="DsbB"/>
    <property type="match status" value="1"/>
</dbReference>
<dbReference type="PIRSF" id="PIRSF036659">
    <property type="entry name" value="BdbC"/>
    <property type="match status" value="1"/>
</dbReference>
<dbReference type="SUPFAM" id="SSF158442">
    <property type="entry name" value="DsbB-like"/>
    <property type="match status" value="1"/>
</dbReference>
<gene>
    <name type="ordered locus">CPn_0227</name>
    <name type="ordered locus">CP_0537</name>
    <name type="ordered locus">CpB0233</name>
</gene>
<sequence length="136" mass="15269">MINFIRSYALYFAWAISCAGTLISIFYSYILNVEPCILCYYQRICLFPLTVILGISAYREDSSIKLYILPQAVLGLGISIYQVFLQEIPGMQLDICGRVSCSTKIFLFSYVTIPMASVVAFGAIVCLLVLTKKYRG</sequence>
<proteinExistence type="inferred from homology"/>
<evidence type="ECO:0000255" key="1">
    <source>
        <dbReference type="HAMAP-Rule" id="MF_00287"/>
    </source>
</evidence>
<evidence type="ECO:0000305" key="2"/>
<organism>
    <name type="scientific">Chlamydia pneumoniae</name>
    <name type="common">Chlamydophila pneumoniae</name>
    <dbReference type="NCBI Taxonomy" id="83558"/>
    <lineage>
        <taxon>Bacteria</taxon>
        <taxon>Pseudomonadati</taxon>
        <taxon>Chlamydiota</taxon>
        <taxon>Chlamydiia</taxon>
        <taxon>Chlamydiales</taxon>
        <taxon>Chlamydiaceae</taxon>
        <taxon>Chlamydia/Chlamydophila group</taxon>
        <taxon>Chlamydia</taxon>
    </lineage>
</organism>
<accession>Q9Z8V7</accession>